<protein>
    <recommendedName>
        <fullName evidence="1">1-deoxy-D-xylulose-5-phosphate synthase</fullName>
        <ecNumber evidence="1">2.2.1.7</ecNumber>
    </recommendedName>
    <alternativeName>
        <fullName evidence="1">1-deoxyxylulose-5-phosphate synthase</fullName>
        <shortName evidence="1">DXP synthase</shortName>
        <shortName evidence="1">DXPS</shortName>
    </alternativeName>
</protein>
<reference key="1">
    <citation type="journal article" date="2004" name="Nucleic Acids Res.">
        <title>The genome sequence of Bacillus cereus ATCC 10987 reveals metabolic adaptations and a large plasmid related to Bacillus anthracis pXO1.</title>
        <authorList>
            <person name="Rasko D.A."/>
            <person name="Ravel J."/>
            <person name="Oekstad O.A."/>
            <person name="Helgason E."/>
            <person name="Cer R.Z."/>
            <person name="Jiang L."/>
            <person name="Shores K.A."/>
            <person name="Fouts D.E."/>
            <person name="Tourasse N.J."/>
            <person name="Angiuoli S.V."/>
            <person name="Kolonay J.F."/>
            <person name="Nelson W.C."/>
            <person name="Kolstoe A.-B."/>
            <person name="Fraser C.M."/>
            <person name="Read T.D."/>
        </authorList>
    </citation>
    <scope>NUCLEOTIDE SEQUENCE [LARGE SCALE GENOMIC DNA]</scope>
    <source>
        <strain>ATCC 10987 / NRS 248</strain>
    </source>
</reference>
<feature type="chain" id="PRO_0000256373" description="1-deoxy-D-xylulose-5-phosphate synthase">
    <location>
        <begin position="1"/>
        <end position="630"/>
    </location>
</feature>
<feature type="binding site" evidence="1">
    <location>
        <position position="72"/>
    </location>
    <ligand>
        <name>thiamine diphosphate</name>
        <dbReference type="ChEBI" id="CHEBI:58937"/>
    </ligand>
</feature>
<feature type="binding site" evidence="1">
    <location>
        <begin position="113"/>
        <end position="115"/>
    </location>
    <ligand>
        <name>thiamine diphosphate</name>
        <dbReference type="ChEBI" id="CHEBI:58937"/>
    </ligand>
</feature>
<feature type="binding site" evidence="1">
    <location>
        <position position="144"/>
    </location>
    <ligand>
        <name>Mg(2+)</name>
        <dbReference type="ChEBI" id="CHEBI:18420"/>
    </ligand>
</feature>
<feature type="binding site" evidence="1">
    <location>
        <begin position="145"/>
        <end position="146"/>
    </location>
    <ligand>
        <name>thiamine diphosphate</name>
        <dbReference type="ChEBI" id="CHEBI:58937"/>
    </ligand>
</feature>
<feature type="binding site" evidence="1">
    <location>
        <position position="173"/>
    </location>
    <ligand>
        <name>Mg(2+)</name>
        <dbReference type="ChEBI" id="CHEBI:18420"/>
    </ligand>
</feature>
<feature type="binding site" evidence="1">
    <location>
        <position position="173"/>
    </location>
    <ligand>
        <name>thiamine diphosphate</name>
        <dbReference type="ChEBI" id="CHEBI:58937"/>
    </ligand>
</feature>
<feature type="binding site" evidence="1">
    <location>
        <position position="284"/>
    </location>
    <ligand>
        <name>thiamine diphosphate</name>
        <dbReference type="ChEBI" id="CHEBI:58937"/>
    </ligand>
</feature>
<feature type="binding site" evidence="1">
    <location>
        <position position="367"/>
    </location>
    <ligand>
        <name>thiamine diphosphate</name>
        <dbReference type="ChEBI" id="CHEBI:58937"/>
    </ligand>
</feature>
<accession>Q731B7</accession>
<comment type="function">
    <text evidence="1">Catalyzes the acyloin condensation reaction between C atoms 2 and 3 of pyruvate and glyceraldehyde 3-phosphate to yield 1-deoxy-D-xylulose-5-phosphate (DXP).</text>
</comment>
<comment type="catalytic activity">
    <reaction evidence="1">
        <text>D-glyceraldehyde 3-phosphate + pyruvate + H(+) = 1-deoxy-D-xylulose 5-phosphate + CO2</text>
        <dbReference type="Rhea" id="RHEA:12605"/>
        <dbReference type="ChEBI" id="CHEBI:15361"/>
        <dbReference type="ChEBI" id="CHEBI:15378"/>
        <dbReference type="ChEBI" id="CHEBI:16526"/>
        <dbReference type="ChEBI" id="CHEBI:57792"/>
        <dbReference type="ChEBI" id="CHEBI:59776"/>
        <dbReference type="EC" id="2.2.1.7"/>
    </reaction>
</comment>
<comment type="cofactor">
    <cofactor evidence="1">
        <name>Mg(2+)</name>
        <dbReference type="ChEBI" id="CHEBI:18420"/>
    </cofactor>
    <text evidence="1">Binds 1 Mg(2+) ion per subunit.</text>
</comment>
<comment type="cofactor">
    <cofactor evidence="1">
        <name>thiamine diphosphate</name>
        <dbReference type="ChEBI" id="CHEBI:58937"/>
    </cofactor>
    <text evidence="1">Binds 1 thiamine pyrophosphate per subunit.</text>
</comment>
<comment type="pathway">
    <text evidence="1">Metabolic intermediate biosynthesis; 1-deoxy-D-xylulose 5-phosphate biosynthesis; 1-deoxy-D-xylulose 5-phosphate from D-glyceraldehyde 3-phosphate and pyruvate: step 1/1.</text>
</comment>
<comment type="subunit">
    <text evidence="1">Homodimer.</text>
</comment>
<comment type="similarity">
    <text evidence="1">Belongs to the transketolase family. DXPS subfamily.</text>
</comment>
<sequence>MDLTQIQNPSFLKDMSISELEGLSEDIRKFLIEELSQTGGHIAPNLGVVELTIALHKLFDSPKDKFLWDVGHQSYVHKILTGRAKEFGTLRQYQGLCGFPKRCESEHDVWETGHSSTSLSAAMGMALARDLKKTKEYVIPIIGDGALTGGMALEALNHIGHEKTDMIVILNDNEMSIAPNVGALHNVLGRLRTAGKYHWVKDELEYILKKIPAVGGKVAATAEKIKDSLKYLLVSGVFFEELGFTYLGPVDGHDYEKLFETLQYAKKTKGPVLVHVITKKGKGYKPAESDVIGTWHGTGPYKIESGDFVKPKEVAPAWSAVVSETVLKLARTDERIVAITPAMPVGSKLEKFQKEFPDRMIDVGIAEQHATTMAAGMATQGMKPFLAIYSTFLQRAYDQVVHDICRQNLNVFIGIDRSGLVGADGETHQGVFDISFLRHLPNMVLMMPKDENEGQHLVYTAMQYEDGPIALRYARGNGLGVHMDEELKAIPIGSWETLKEGTQAAILTFGTTIPMAMEAAERLEKAGVSVKVVNARFIKPMDEAYLHDLLGKNIPILTIEEACLIGGFGTGVVEFASENGYHSALVERMGIPDRFIEHGSVTKLLEEIGLTTDAVVDRIHTMIPSKQKRA</sequence>
<organism>
    <name type="scientific">Bacillus cereus (strain ATCC 10987 / NRS 248)</name>
    <dbReference type="NCBI Taxonomy" id="222523"/>
    <lineage>
        <taxon>Bacteria</taxon>
        <taxon>Bacillati</taxon>
        <taxon>Bacillota</taxon>
        <taxon>Bacilli</taxon>
        <taxon>Bacillales</taxon>
        <taxon>Bacillaceae</taxon>
        <taxon>Bacillus</taxon>
        <taxon>Bacillus cereus group</taxon>
    </lineage>
</organism>
<keyword id="KW-0414">Isoprene biosynthesis</keyword>
<keyword id="KW-0460">Magnesium</keyword>
<keyword id="KW-0479">Metal-binding</keyword>
<keyword id="KW-0784">Thiamine biosynthesis</keyword>
<keyword id="KW-0786">Thiamine pyrophosphate</keyword>
<keyword id="KW-0808">Transferase</keyword>
<proteinExistence type="inferred from homology"/>
<gene>
    <name evidence="1" type="primary">dxs</name>
    <name type="ordered locus">BCE_4249</name>
</gene>
<dbReference type="EC" id="2.2.1.7" evidence="1"/>
<dbReference type="EMBL" id="AE017194">
    <property type="protein sequence ID" value="AAS43150.1"/>
    <property type="molecule type" value="Genomic_DNA"/>
</dbReference>
<dbReference type="SMR" id="Q731B7"/>
<dbReference type="KEGG" id="bca:BCE_4249"/>
<dbReference type="HOGENOM" id="CLU_009227_1_4_9"/>
<dbReference type="UniPathway" id="UPA00064">
    <property type="reaction ID" value="UER00091"/>
</dbReference>
<dbReference type="Proteomes" id="UP000002527">
    <property type="component" value="Chromosome"/>
</dbReference>
<dbReference type="GO" id="GO:0005829">
    <property type="term" value="C:cytosol"/>
    <property type="evidence" value="ECO:0007669"/>
    <property type="project" value="TreeGrafter"/>
</dbReference>
<dbReference type="GO" id="GO:0008661">
    <property type="term" value="F:1-deoxy-D-xylulose-5-phosphate synthase activity"/>
    <property type="evidence" value="ECO:0007669"/>
    <property type="project" value="UniProtKB-UniRule"/>
</dbReference>
<dbReference type="GO" id="GO:0000287">
    <property type="term" value="F:magnesium ion binding"/>
    <property type="evidence" value="ECO:0007669"/>
    <property type="project" value="UniProtKB-UniRule"/>
</dbReference>
<dbReference type="GO" id="GO:0030976">
    <property type="term" value="F:thiamine pyrophosphate binding"/>
    <property type="evidence" value="ECO:0007669"/>
    <property type="project" value="UniProtKB-UniRule"/>
</dbReference>
<dbReference type="GO" id="GO:0052865">
    <property type="term" value="P:1-deoxy-D-xylulose 5-phosphate biosynthetic process"/>
    <property type="evidence" value="ECO:0007669"/>
    <property type="project" value="UniProtKB-UniPathway"/>
</dbReference>
<dbReference type="GO" id="GO:0019288">
    <property type="term" value="P:isopentenyl diphosphate biosynthetic process, methylerythritol 4-phosphate pathway"/>
    <property type="evidence" value="ECO:0007669"/>
    <property type="project" value="TreeGrafter"/>
</dbReference>
<dbReference type="GO" id="GO:0016114">
    <property type="term" value="P:terpenoid biosynthetic process"/>
    <property type="evidence" value="ECO:0007669"/>
    <property type="project" value="UniProtKB-UniRule"/>
</dbReference>
<dbReference type="GO" id="GO:0009228">
    <property type="term" value="P:thiamine biosynthetic process"/>
    <property type="evidence" value="ECO:0007669"/>
    <property type="project" value="UniProtKB-UniRule"/>
</dbReference>
<dbReference type="CDD" id="cd02007">
    <property type="entry name" value="TPP_DXS"/>
    <property type="match status" value="1"/>
</dbReference>
<dbReference type="CDD" id="cd07033">
    <property type="entry name" value="TPP_PYR_DXS_TK_like"/>
    <property type="match status" value="1"/>
</dbReference>
<dbReference type="FunFam" id="3.40.50.920:FF:000002">
    <property type="entry name" value="1-deoxy-D-xylulose-5-phosphate synthase"/>
    <property type="match status" value="1"/>
</dbReference>
<dbReference type="FunFam" id="3.40.50.970:FF:000030">
    <property type="entry name" value="1-deoxy-D-xylulose-5-phosphate synthase"/>
    <property type="match status" value="1"/>
</dbReference>
<dbReference type="Gene3D" id="3.40.50.920">
    <property type="match status" value="1"/>
</dbReference>
<dbReference type="Gene3D" id="3.40.50.970">
    <property type="match status" value="2"/>
</dbReference>
<dbReference type="HAMAP" id="MF_00315">
    <property type="entry name" value="DXP_synth"/>
    <property type="match status" value="1"/>
</dbReference>
<dbReference type="InterPro" id="IPR005477">
    <property type="entry name" value="Dxylulose-5-P_synthase"/>
</dbReference>
<dbReference type="InterPro" id="IPR029061">
    <property type="entry name" value="THDP-binding"/>
</dbReference>
<dbReference type="InterPro" id="IPR009014">
    <property type="entry name" value="Transketo_C/PFOR_II"/>
</dbReference>
<dbReference type="InterPro" id="IPR005475">
    <property type="entry name" value="Transketolase-like_Pyr-bd"/>
</dbReference>
<dbReference type="InterPro" id="IPR020826">
    <property type="entry name" value="Transketolase_BS"/>
</dbReference>
<dbReference type="InterPro" id="IPR033248">
    <property type="entry name" value="Transketolase_C"/>
</dbReference>
<dbReference type="InterPro" id="IPR049557">
    <property type="entry name" value="Transketolase_CS"/>
</dbReference>
<dbReference type="NCBIfam" id="TIGR00204">
    <property type="entry name" value="dxs"/>
    <property type="match status" value="1"/>
</dbReference>
<dbReference type="NCBIfam" id="NF003933">
    <property type="entry name" value="PRK05444.2-2"/>
    <property type="match status" value="1"/>
</dbReference>
<dbReference type="PANTHER" id="PTHR43322">
    <property type="entry name" value="1-D-DEOXYXYLULOSE 5-PHOSPHATE SYNTHASE-RELATED"/>
    <property type="match status" value="1"/>
</dbReference>
<dbReference type="PANTHER" id="PTHR43322:SF5">
    <property type="entry name" value="1-DEOXY-D-XYLULOSE-5-PHOSPHATE SYNTHASE, CHLOROPLASTIC"/>
    <property type="match status" value="1"/>
</dbReference>
<dbReference type="Pfam" id="PF13292">
    <property type="entry name" value="DXP_synthase_N"/>
    <property type="match status" value="1"/>
</dbReference>
<dbReference type="Pfam" id="PF02779">
    <property type="entry name" value="Transket_pyr"/>
    <property type="match status" value="1"/>
</dbReference>
<dbReference type="Pfam" id="PF02780">
    <property type="entry name" value="Transketolase_C"/>
    <property type="match status" value="1"/>
</dbReference>
<dbReference type="SMART" id="SM00861">
    <property type="entry name" value="Transket_pyr"/>
    <property type="match status" value="1"/>
</dbReference>
<dbReference type="SUPFAM" id="SSF52518">
    <property type="entry name" value="Thiamin diphosphate-binding fold (THDP-binding)"/>
    <property type="match status" value="2"/>
</dbReference>
<dbReference type="SUPFAM" id="SSF52922">
    <property type="entry name" value="TK C-terminal domain-like"/>
    <property type="match status" value="1"/>
</dbReference>
<dbReference type="PROSITE" id="PS00801">
    <property type="entry name" value="TRANSKETOLASE_1"/>
    <property type="match status" value="1"/>
</dbReference>
<dbReference type="PROSITE" id="PS00802">
    <property type="entry name" value="TRANSKETOLASE_2"/>
    <property type="match status" value="1"/>
</dbReference>
<name>DXS_BACC1</name>
<evidence type="ECO:0000255" key="1">
    <source>
        <dbReference type="HAMAP-Rule" id="MF_00315"/>
    </source>
</evidence>